<protein>
    <recommendedName>
        <fullName>Mitochondrial inner membrane protease subunit 2</fullName>
        <ecNumber>3.4.21.-</ecNumber>
    </recommendedName>
    <alternativeName>
        <fullName>IMP2-like protein</fullName>
    </alternativeName>
</protein>
<keyword id="KW-0025">Alternative splicing</keyword>
<keyword id="KW-0378">Hydrolase</keyword>
<keyword id="KW-0472">Membrane</keyword>
<keyword id="KW-0496">Mitochondrion</keyword>
<keyword id="KW-0999">Mitochondrion inner membrane</keyword>
<keyword id="KW-0645">Protease</keyword>
<keyword id="KW-1267">Proteomics identification</keyword>
<keyword id="KW-1185">Reference proteome</keyword>
<keyword id="KW-0812">Transmembrane</keyword>
<keyword id="KW-1133">Transmembrane helix</keyword>
<accession>Q96T52</accession>
<accession>Q75MF1</accession>
<accession>Q75MN9</accession>
<accession>Q75MP0</accession>
<accession>Q75MS5</accession>
<accession>Q75MS8</accession>
<accession>Q96HJ2</accession>
<comment type="function">
    <text evidence="4">Catalyzes the removal of transit peptides required for the targeting of proteins from the mitochondrial matrix, across the inner membrane, into the inter-membrane space. Known to process the nuclear encoded protein DIABLO.</text>
</comment>
<comment type="subunit">
    <text evidence="1">Heterodimer of 2 subunits, IMMPL1 and IMMPL2.</text>
</comment>
<comment type="interaction">
    <interactant intactId="EBI-25907627">
        <id>Q96T52-2</id>
    </interactant>
    <interactant intactId="EBI-725647">
        <id>Q99732</id>
        <label>LITAF</label>
    </interactant>
    <organismsDiffer>false</organismsDiffer>
    <experiments>3</experiments>
</comment>
<comment type="subcellular location">
    <subcellularLocation>
        <location evidence="7">Mitochondrion inner membrane</location>
        <topology evidence="7">Single-pass membrane protein</topology>
    </subcellularLocation>
</comment>
<comment type="alternative products">
    <event type="alternative splicing"/>
    <isoform>
        <id>Q96T52-1</id>
        <name>1</name>
        <sequence type="displayed"/>
    </isoform>
    <isoform>
        <id>Q96T52-2</id>
        <name>2</name>
        <sequence type="described" ref="VSP_021474 VSP_021475"/>
    </isoform>
</comment>
<comment type="tissue specificity">
    <text evidence="3">Expressed in all tissues tested except adult liver and lung.</text>
</comment>
<comment type="disease" evidence="3">
    <disease id="DI-01660">
        <name>Gilles de la Tourette syndrome</name>
        <acronym>GTS</acronym>
        <description>Neurologic disorder manifested particularly by motor and vocal tics and associated with behavioral abnormalities.</description>
        <dbReference type="MIM" id="137580"/>
    </disease>
    <text>The disease may be caused by variants affecting the gene represented in this entry.</text>
</comment>
<comment type="similarity">
    <text evidence="6">Belongs to the peptidase S26 family. IMP2 subfamily.</text>
</comment>
<reference key="1">
    <citation type="journal article" date="2001" name="Am. J. Hum. Genet.">
        <title>Disruption of a novel gene (IMMP2L) by a breakpoint in 7q31 associated with Tourette syndrome.</title>
        <authorList>
            <person name="Petek E."/>
            <person name="Windpassinger C."/>
            <person name="Vincent J.B."/>
            <person name="Cheung J."/>
            <person name="Boright A.P."/>
            <person name="Scherer S.W."/>
            <person name="Kroisel P.M."/>
            <person name="Wagner K."/>
        </authorList>
    </citation>
    <scope>NUCLEOTIDE SEQUENCE [MRNA] (ISOFORM 1)</scope>
    <scope>POSSIBLE INVOLVEMENT IN GTS</scope>
    <scope>TISSUE SPECIFICITY</scope>
</reference>
<reference key="2">
    <citation type="journal article" date="2003" name="Nature">
        <title>The DNA sequence of human chromosome 7.</title>
        <authorList>
            <person name="Hillier L.W."/>
            <person name="Fulton R.S."/>
            <person name="Fulton L.A."/>
            <person name="Graves T.A."/>
            <person name="Pepin K.H."/>
            <person name="Wagner-McPherson C."/>
            <person name="Layman D."/>
            <person name="Maas J."/>
            <person name="Jaeger S."/>
            <person name="Walker R."/>
            <person name="Wylie K."/>
            <person name="Sekhon M."/>
            <person name="Becker M.C."/>
            <person name="O'Laughlin M.D."/>
            <person name="Schaller M.E."/>
            <person name="Fewell G.A."/>
            <person name="Delehaunty K.D."/>
            <person name="Miner T.L."/>
            <person name="Nash W.E."/>
            <person name="Cordes M."/>
            <person name="Du H."/>
            <person name="Sun H."/>
            <person name="Edwards J."/>
            <person name="Bradshaw-Cordum H."/>
            <person name="Ali J."/>
            <person name="Andrews S."/>
            <person name="Isak A."/>
            <person name="Vanbrunt A."/>
            <person name="Nguyen C."/>
            <person name="Du F."/>
            <person name="Lamar B."/>
            <person name="Courtney L."/>
            <person name="Kalicki J."/>
            <person name="Ozersky P."/>
            <person name="Bielicki L."/>
            <person name="Scott K."/>
            <person name="Holmes A."/>
            <person name="Harkins R."/>
            <person name="Harris A."/>
            <person name="Strong C.M."/>
            <person name="Hou S."/>
            <person name="Tomlinson C."/>
            <person name="Dauphin-Kohlberg S."/>
            <person name="Kozlowicz-Reilly A."/>
            <person name="Leonard S."/>
            <person name="Rohlfing T."/>
            <person name="Rock S.M."/>
            <person name="Tin-Wollam A.-M."/>
            <person name="Abbott A."/>
            <person name="Minx P."/>
            <person name="Maupin R."/>
            <person name="Strowmatt C."/>
            <person name="Latreille P."/>
            <person name="Miller N."/>
            <person name="Johnson D."/>
            <person name="Murray J."/>
            <person name="Woessner J.P."/>
            <person name="Wendl M.C."/>
            <person name="Yang S.-P."/>
            <person name="Schultz B.R."/>
            <person name="Wallis J.W."/>
            <person name="Spieth J."/>
            <person name="Bieri T.A."/>
            <person name="Nelson J.O."/>
            <person name="Berkowicz N."/>
            <person name="Wohldmann P.E."/>
            <person name="Cook L.L."/>
            <person name="Hickenbotham M.T."/>
            <person name="Eldred J."/>
            <person name="Williams D."/>
            <person name="Bedell J.A."/>
            <person name="Mardis E.R."/>
            <person name="Clifton S.W."/>
            <person name="Chissoe S.L."/>
            <person name="Marra M.A."/>
            <person name="Raymond C."/>
            <person name="Haugen E."/>
            <person name="Gillett W."/>
            <person name="Zhou Y."/>
            <person name="James R."/>
            <person name="Phelps K."/>
            <person name="Iadanoto S."/>
            <person name="Bubb K."/>
            <person name="Simms E."/>
            <person name="Levy R."/>
            <person name="Clendenning J."/>
            <person name="Kaul R."/>
            <person name="Kent W.J."/>
            <person name="Furey T.S."/>
            <person name="Baertsch R.A."/>
            <person name="Brent M.R."/>
            <person name="Keibler E."/>
            <person name="Flicek P."/>
            <person name="Bork P."/>
            <person name="Suyama M."/>
            <person name="Bailey J.A."/>
            <person name="Portnoy M.E."/>
            <person name="Torrents D."/>
            <person name="Chinwalla A.T."/>
            <person name="Gish W.R."/>
            <person name="Eddy S.R."/>
            <person name="McPherson J.D."/>
            <person name="Olson M.V."/>
            <person name="Eichler E.E."/>
            <person name="Green E.D."/>
            <person name="Waterston R.H."/>
            <person name="Wilson R.K."/>
        </authorList>
    </citation>
    <scope>NUCLEOTIDE SEQUENCE [LARGE SCALE GENOMIC DNA]</scope>
</reference>
<reference key="3">
    <citation type="journal article" date="2004" name="Genome Res.">
        <title>The status, quality, and expansion of the NIH full-length cDNA project: the Mammalian Gene Collection (MGC).</title>
        <authorList>
            <consortium name="The MGC Project Team"/>
        </authorList>
    </citation>
    <scope>NUCLEOTIDE SEQUENCE [LARGE SCALE MRNA] (ISOFORM 2)</scope>
    <source>
        <tissue>Brain</tissue>
    </source>
</reference>
<reference key="4">
    <citation type="journal article" date="2005" name="Mol. Biol. Cell">
        <title>Mature DIABLO/Smac is produced by the IMP protease complex on the mitochondrial inner membrane.</title>
        <authorList>
            <person name="Burri L."/>
            <person name="Strahm Y."/>
            <person name="Hawkins C.J."/>
            <person name="Gentle I.E."/>
            <person name="Puryer M.A."/>
            <person name="Verhagen A."/>
            <person name="Callus B."/>
            <person name="Vaux D."/>
            <person name="Lithgow T."/>
        </authorList>
    </citation>
    <scope>FUNCTION</scope>
    <scope>SUBCELLULAR LOCATION</scope>
</reference>
<proteinExistence type="evidence at protein level"/>
<sequence length="175" mass="19718">MAQSQGWVKRYIKAFCKGFFVAVPVAVTFLDRVACVARVEGASMQPSLNPGGSQSSDVVLLNHWKVRNFEVHRGDIVSLVSPKNPEQKIIKRVIALEGDIVRTIGHKNRYVKVPRGHIWVEGDHHGHSFDSNSFGPVSLGLLHAHATHILWPPERWQKLESVLPPERLPVQREEE</sequence>
<name>IMP2L_HUMAN</name>
<dbReference type="EC" id="3.4.21.-"/>
<dbReference type="EMBL" id="AF359563">
    <property type="protein sequence ID" value="AAK52905.1"/>
    <property type="molecule type" value="mRNA"/>
</dbReference>
<dbReference type="EMBL" id="AC005161">
    <property type="protein sequence ID" value="AAS07432.1"/>
    <property type="molecule type" value="Genomic_DNA"/>
</dbReference>
<dbReference type="EMBL" id="AC005166">
    <property type="protein sequence ID" value="AAS02043.1"/>
    <property type="molecule type" value="Genomic_DNA"/>
</dbReference>
<dbReference type="EMBL" id="AC006392">
    <property type="protein sequence ID" value="AAS07496.1"/>
    <property type="molecule type" value="Genomic_DNA"/>
</dbReference>
<dbReference type="EMBL" id="AC006392">
    <property type="protein sequence ID" value="AAS07497.1"/>
    <property type="molecule type" value="Genomic_DNA"/>
</dbReference>
<dbReference type="EMBL" id="AC073326">
    <property type="protein sequence ID" value="AAS07528.1"/>
    <property type="molecule type" value="Genomic_DNA"/>
</dbReference>
<dbReference type="EMBL" id="BC008497">
    <property type="protein sequence ID" value="AAH08497.1"/>
    <property type="molecule type" value="mRNA"/>
</dbReference>
<dbReference type="CCDS" id="CCDS5753.1">
    <molecule id="Q96T52-1"/>
</dbReference>
<dbReference type="CCDS" id="CCDS87540.1">
    <molecule id="Q96T52-2"/>
</dbReference>
<dbReference type="RefSeq" id="NP_001231535.1">
    <molecule id="Q96T52-1"/>
    <property type="nucleotide sequence ID" value="NM_001244606.2"/>
</dbReference>
<dbReference type="RefSeq" id="NP_001337888.1">
    <molecule id="Q96T52-1"/>
    <property type="nucleotide sequence ID" value="NM_001350959.2"/>
</dbReference>
<dbReference type="RefSeq" id="NP_001337889.1">
    <molecule id="Q96T52-1"/>
    <property type="nucleotide sequence ID" value="NM_001350960.2"/>
</dbReference>
<dbReference type="RefSeq" id="NP_001337891.1">
    <molecule id="Q96T52-2"/>
    <property type="nucleotide sequence ID" value="NM_001350962.2"/>
</dbReference>
<dbReference type="RefSeq" id="NP_115938.1">
    <molecule id="Q96T52-1"/>
    <property type="nucleotide sequence ID" value="NM_032549.4"/>
</dbReference>
<dbReference type="RefSeq" id="XP_005250687.1">
    <property type="nucleotide sequence ID" value="XM_005250630.3"/>
</dbReference>
<dbReference type="RefSeq" id="XP_016868194.1">
    <property type="nucleotide sequence ID" value="XM_017012705.1"/>
</dbReference>
<dbReference type="SMR" id="Q96T52"/>
<dbReference type="BioGRID" id="123826">
    <property type="interactions" value="383"/>
</dbReference>
<dbReference type="ComplexPortal" id="CPX-6244">
    <property type="entry name" value="Mitochondrial inner membrane peptidase complex"/>
</dbReference>
<dbReference type="FunCoup" id="Q96T52">
    <property type="interactions" value="538"/>
</dbReference>
<dbReference type="IntAct" id="Q96T52">
    <property type="interactions" value="385"/>
</dbReference>
<dbReference type="MINT" id="Q96T52"/>
<dbReference type="STRING" id="9606.ENSP00000384966"/>
<dbReference type="MEROPS" id="S26.A09"/>
<dbReference type="GlyGen" id="Q96T52">
    <property type="glycosylation" value="1 site, 1 O-linked glycan (1 site)"/>
</dbReference>
<dbReference type="iPTMnet" id="Q96T52"/>
<dbReference type="PhosphoSitePlus" id="Q96T52"/>
<dbReference type="BioMuta" id="IMMP2L"/>
<dbReference type="DMDM" id="74752143"/>
<dbReference type="jPOST" id="Q96T52"/>
<dbReference type="MassIVE" id="Q96T52"/>
<dbReference type="PaxDb" id="9606-ENSP00000384966"/>
<dbReference type="PeptideAtlas" id="Q96T52"/>
<dbReference type="ProteomicsDB" id="78187">
    <molecule id="Q96T52-1"/>
</dbReference>
<dbReference type="ProteomicsDB" id="78188">
    <molecule id="Q96T52-2"/>
</dbReference>
<dbReference type="Pumba" id="Q96T52"/>
<dbReference type="Antibodypedia" id="17351">
    <property type="antibodies" value="131 antibodies from 27 providers"/>
</dbReference>
<dbReference type="DNASU" id="83943"/>
<dbReference type="Ensembl" id="ENST00000331762.7">
    <molecule id="Q96T52-1"/>
    <property type="protein sequence ID" value="ENSP00000329553.3"/>
    <property type="gene ID" value="ENSG00000184903.10"/>
</dbReference>
<dbReference type="Ensembl" id="ENST00000405709.7">
    <molecule id="Q96T52-1"/>
    <property type="protein sequence ID" value="ENSP00000384966.2"/>
    <property type="gene ID" value="ENSG00000184903.10"/>
</dbReference>
<dbReference type="Ensembl" id="ENST00000447215.5">
    <molecule id="Q96T52-2"/>
    <property type="protein sequence ID" value="ENSP00000388327.1"/>
    <property type="gene ID" value="ENSG00000184903.10"/>
</dbReference>
<dbReference type="Ensembl" id="ENST00000452895.5">
    <molecule id="Q96T52-1"/>
    <property type="protein sequence ID" value="ENSP00000399353.1"/>
    <property type="gene ID" value="ENSG00000184903.10"/>
</dbReference>
<dbReference type="GeneID" id="83943"/>
<dbReference type="KEGG" id="hsa:83943"/>
<dbReference type="MANE-Select" id="ENST00000405709.7">
    <property type="protein sequence ID" value="ENSP00000384966.2"/>
    <property type="RefSeq nucleotide sequence ID" value="NM_032549.4"/>
    <property type="RefSeq protein sequence ID" value="NP_115938.1"/>
</dbReference>
<dbReference type="UCSC" id="uc003vfq.3">
    <molecule id="Q96T52-1"/>
    <property type="organism name" value="human"/>
</dbReference>
<dbReference type="AGR" id="HGNC:14598"/>
<dbReference type="CTD" id="83943"/>
<dbReference type="DisGeNET" id="83943"/>
<dbReference type="GeneCards" id="IMMP2L"/>
<dbReference type="HGNC" id="HGNC:14598">
    <property type="gene designation" value="IMMP2L"/>
</dbReference>
<dbReference type="HPA" id="ENSG00000184903">
    <property type="expression patterns" value="Low tissue specificity"/>
</dbReference>
<dbReference type="MalaCards" id="IMMP2L"/>
<dbReference type="MIM" id="137580">
    <property type="type" value="phenotype"/>
</dbReference>
<dbReference type="MIM" id="605977">
    <property type="type" value="gene"/>
</dbReference>
<dbReference type="neXtProt" id="NX_Q96T52"/>
<dbReference type="OpenTargets" id="ENSG00000184903"/>
<dbReference type="PharmGKB" id="PA134887258"/>
<dbReference type="VEuPathDB" id="HostDB:ENSG00000184903"/>
<dbReference type="eggNOG" id="KOG1568">
    <property type="taxonomic scope" value="Eukaryota"/>
</dbReference>
<dbReference type="GeneTree" id="ENSGT00550000075044"/>
<dbReference type="HOGENOM" id="CLU_028723_4_1_1"/>
<dbReference type="InParanoid" id="Q96T52"/>
<dbReference type="OMA" id="WIPVIAW"/>
<dbReference type="OrthoDB" id="9996127at2759"/>
<dbReference type="PAN-GO" id="Q96T52">
    <property type="GO annotations" value="3 GO annotations based on evolutionary models"/>
</dbReference>
<dbReference type="PhylomeDB" id="Q96T52"/>
<dbReference type="TreeFam" id="TF315065"/>
<dbReference type="PathwayCommons" id="Q96T52"/>
<dbReference type="SignaLink" id="Q96T52"/>
<dbReference type="BioGRID-ORCS" id="83943">
    <property type="hits" value="12 hits in 1159 CRISPR screens"/>
</dbReference>
<dbReference type="ChiTaRS" id="IMMP2L">
    <property type="organism name" value="human"/>
</dbReference>
<dbReference type="GenomeRNAi" id="83943"/>
<dbReference type="Pharos" id="Q96T52">
    <property type="development level" value="Tbio"/>
</dbReference>
<dbReference type="PRO" id="PR:Q96T52"/>
<dbReference type="Proteomes" id="UP000005640">
    <property type="component" value="Chromosome 7"/>
</dbReference>
<dbReference type="RNAct" id="Q96T52">
    <property type="molecule type" value="protein"/>
</dbReference>
<dbReference type="Bgee" id="ENSG00000184903">
    <property type="expression patterns" value="Expressed in tibialis anterior and 158 other cell types or tissues"/>
</dbReference>
<dbReference type="ExpressionAtlas" id="Q96T52">
    <property type="expression patterns" value="baseline and differential"/>
</dbReference>
<dbReference type="GO" id="GO:0005743">
    <property type="term" value="C:mitochondrial inner membrane"/>
    <property type="evidence" value="ECO:0000303"/>
    <property type="project" value="ComplexPortal"/>
</dbReference>
<dbReference type="GO" id="GO:0042720">
    <property type="term" value="C:mitochondrial inner membrane peptidase complex"/>
    <property type="evidence" value="ECO:0000250"/>
    <property type="project" value="UniProtKB"/>
</dbReference>
<dbReference type="GO" id="GO:0005739">
    <property type="term" value="C:mitochondrion"/>
    <property type="evidence" value="ECO:0006056"/>
    <property type="project" value="FlyBase"/>
</dbReference>
<dbReference type="GO" id="GO:0004175">
    <property type="term" value="F:endopeptidase activity"/>
    <property type="evidence" value="ECO:0000318"/>
    <property type="project" value="GO_Central"/>
</dbReference>
<dbReference type="GO" id="GO:0008233">
    <property type="term" value="F:peptidase activity"/>
    <property type="evidence" value="ECO:0000250"/>
    <property type="project" value="UniProtKB"/>
</dbReference>
<dbReference type="GO" id="GO:0004252">
    <property type="term" value="F:serine-type endopeptidase activity"/>
    <property type="evidence" value="ECO:0007669"/>
    <property type="project" value="InterPro"/>
</dbReference>
<dbReference type="GO" id="GO:0008015">
    <property type="term" value="P:blood circulation"/>
    <property type="evidence" value="ECO:0007669"/>
    <property type="project" value="Ensembl"/>
</dbReference>
<dbReference type="GO" id="GO:0007420">
    <property type="term" value="P:brain development"/>
    <property type="evidence" value="ECO:0007669"/>
    <property type="project" value="Ensembl"/>
</dbReference>
<dbReference type="GO" id="GO:0061300">
    <property type="term" value="P:cerebellum vasculature development"/>
    <property type="evidence" value="ECO:0007669"/>
    <property type="project" value="Ensembl"/>
</dbReference>
<dbReference type="GO" id="GO:0006974">
    <property type="term" value="P:DNA damage response"/>
    <property type="evidence" value="ECO:0007669"/>
    <property type="project" value="Ensembl"/>
</dbReference>
<dbReference type="GO" id="GO:0033108">
    <property type="term" value="P:mitochondrial respiratory chain complex assembly"/>
    <property type="evidence" value="ECO:0007669"/>
    <property type="project" value="Ensembl"/>
</dbReference>
<dbReference type="GO" id="GO:0001541">
    <property type="term" value="P:ovarian follicle development"/>
    <property type="evidence" value="ECO:0007669"/>
    <property type="project" value="Ensembl"/>
</dbReference>
<dbReference type="GO" id="GO:0030728">
    <property type="term" value="P:ovulation"/>
    <property type="evidence" value="ECO:0007669"/>
    <property type="project" value="Ensembl"/>
</dbReference>
<dbReference type="GO" id="GO:0006627">
    <property type="term" value="P:protein processing involved in protein targeting to mitochondrion"/>
    <property type="evidence" value="ECO:0000250"/>
    <property type="project" value="UniProtKB"/>
</dbReference>
<dbReference type="GO" id="GO:0022904">
    <property type="term" value="P:respiratory electron transport chain"/>
    <property type="evidence" value="ECO:0007669"/>
    <property type="project" value="Ensembl"/>
</dbReference>
<dbReference type="GO" id="GO:0006465">
    <property type="term" value="P:signal peptide processing"/>
    <property type="evidence" value="ECO:0000303"/>
    <property type="project" value="ComplexPortal"/>
</dbReference>
<dbReference type="GO" id="GO:0007283">
    <property type="term" value="P:spermatogenesis"/>
    <property type="evidence" value="ECO:0007669"/>
    <property type="project" value="Ensembl"/>
</dbReference>
<dbReference type="GO" id="GO:0006801">
    <property type="term" value="P:superoxide metabolic process"/>
    <property type="evidence" value="ECO:0007669"/>
    <property type="project" value="Ensembl"/>
</dbReference>
<dbReference type="CDD" id="cd06530">
    <property type="entry name" value="S26_SPase_I"/>
    <property type="match status" value="1"/>
</dbReference>
<dbReference type="FunFam" id="2.10.109.10:FF:000005">
    <property type="entry name" value="Mitochondrial inner membrane protease subunit"/>
    <property type="match status" value="1"/>
</dbReference>
<dbReference type="Gene3D" id="2.10.109.10">
    <property type="entry name" value="Umud Fragment, subunit A"/>
    <property type="match status" value="1"/>
</dbReference>
<dbReference type="InterPro" id="IPR037730">
    <property type="entry name" value="IMP2"/>
</dbReference>
<dbReference type="InterPro" id="IPR036286">
    <property type="entry name" value="LexA/Signal_pep-like_sf"/>
</dbReference>
<dbReference type="InterPro" id="IPR000223">
    <property type="entry name" value="Pept_S26A_signal_pept_1"/>
</dbReference>
<dbReference type="InterPro" id="IPR019758">
    <property type="entry name" value="Pept_S26A_signal_pept_1_CS"/>
</dbReference>
<dbReference type="InterPro" id="IPR019533">
    <property type="entry name" value="Peptidase_S26"/>
</dbReference>
<dbReference type="NCBIfam" id="TIGR02227">
    <property type="entry name" value="sigpep_I_bact"/>
    <property type="match status" value="1"/>
</dbReference>
<dbReference type="PANTHER" id="PTHR46041">
    <property type="entry name" value="MITOCHONDRIAL INNER MEMBRANE PROTEASE SUBUNIT 2"/>
    <property type="match status" value="1"/>
</dbReference>
<dbReference type="PANTHER" id="PTHR46041:SF2">
    <property type="entry name" value="MITOCHONDRIAL INNER MEMBRANE PROTEASE SUBUNIT 2"/>
    <property type="match status" value="1"/>
</dbReference>
<dbReference type="Pfam" id="PF10502">
    <property type="entry name" value="Peptidase_S26"/>
    <property type="match status" value="2"/>
</dbReference>
<dbReference type="PRINTS" id="PR00727">
    <property type="entry name" value="LEADERPTASE"/>
</dbReference>
<dbReference type="SUPFAM" id="SSF51306">
    <property type="entry name" value="LexA/Signal peptidase"/>
    <property type="match status" value="1"/>
</dbReference>
<dbReference type="PROSITE" id="PS00761">
    <property type="entry name" value="SPASE_I_3"/>
    <property type="match status" value="1"/>
</dbReference>
<feature type="chain" id="PRO_0000259577" description="Mitochondrial inner membrane protease subunit 2">
    <location>
        <begin position="1"/>
        <end position="175"/>
    </location>
</feature>
<feature type="transmembrane region" description="Helical" evidence="2">
    <location>
        <begin position="19"/>
        <end position="37"/>
    </location>
</feature>
<feature type="active site" evidence="1">
    <location>
        <position position="43"/>
    </location>
</feature>
<feature type="active site" evidence="1">
    <location>
        <position position="91"/>
    </location>
</feature>
<feature type="splice variant" id="VSP_021474" description="In isoform 2." evidence="5">
    <original>TIGHKNRY</original>
    <variation>DGRKLKRI</variation>
    <location>
        <begin position="103"/>
        <end position="110"/>
    </location>
</feature>
<feature type="splice variant" id="VSP_021475" description="In isoform 2." evidence="5">
    <location>
        <begin position="111"/>
        <end position="175"/>
    </location>
</feature>
<gene>
    <name type="primary">IMMP2L</name>
</gene>
<evidence type="ECO:0000250" key="1"/>
<evidence type="ECO:0000255" key="2"/>
<evidence type="ECO:0000269" key="3">
    <source>
    </source>
</evidence>
<evidence type="ECO:0000269" key="4">
    <source>
    </source>
</evidence>
<evidence type="ECO:0000303" key="5">
    <source>
    </source>
</evidence>
<evidence type="ECO:0000305" key="6"/>
<evidence type="ECO:0000305" key="7">
    <source>
    </source>
</evidence>
<organism>
    <name type="scientific">Homo sapiens</name>
    <name type="common">Human</name>
    <dbReference type="NCBI Taxonomy" id="9606"/>
    <lineage>
        <taxon>Eukaryota</taxon>
        <taxon>Metazoa</taxon>
        <taxon>Chordata</taxon>
        <taxon>Craniata</taxon>
        <taxon>Vertebrata</taxon>
        <taxon>Euteleostomi</taxon>
        <taxon>Mammalia</taxon>
        <taxon>Eutheria</taxon>
        <taxon>Euarchontoglires</taxon>
        <taxon>Primates</taxon>
        <taxon>Haplorrhini</taxon>
        <taxon>Catarrhini</taxon>
        <taxon>Hominidae</taxon>
        <taxon>Homo</taxon>
    </lineage>
</organism>